<name>LEU3_METJA</name>
<gene>
    <name type="primary">leuB</name>
    <name type="ordered locus">MJ0720</name>
</gene>
<protein>
    <recommendedName>
        <fullName>3-isopropylmalate/3-methylmalate dehydrogenase</fullName>
        <ecNumber>1.1.1.85</ecNumber>
        <ecNumber>1.1.1.n5</ecNumber>
    </recommendedName>
    <alternativeName>
        <fullName>3-isopropylmalate dehydrogenase</fullName>
        <shortName>3-IPM-DH</shortName>
        <shortName>IMDH</shortName>
        <shortName>IPMDH</shortName>
    </alternativeName>
    <alternativeName>
        <fullName>Beta-IPM dehydrogenase</fullName>
    </alternativeName>
    <alternativeName>
        <fullName>D-malate dehydrogenase [decarboxylating]</fullName>
        <ecNumber>1.1.1.83</ecNumber>
    </alternativeName>
</protein>
<dbReference type="EC" id="1.1.1.85"/>
<dbReference type="EC" id="1.1.1.n5"/>
<dbReference type="EC" id="1.1.1.83"/>
<dbReference type="EMBL" id="L77117">
    <property type="protein sequence ID" value="AAB98716.1"/>
    <property type="molecule type" value="Genomic_DNA"/>
</dbReference>
<dbReference type="RefSeq" id="WP_010870225.1">
    <property type="nucleotide sequence ID" value="NC_000909.1"/>
</dbReference>
<dbReference type="SMR" id="Q58130"/>
<dbReference type="FunCoup" id="Q58130">
    <property type="interactions" value="180"/>
</dbReference>
<dbReference type="STRING" id="243232.MJ_0720"/>
<dbReference type="PaxDb" id="243232-MJ_0720"/>
<dbReference type="EnsemblBacteria" id="AAB98716">
    <property type="protein sequence ID" value="AAB98716"/>
    <property type="gene ID" value="MJ_0720"/>
</dbReference>
<dbReference type="GeneID" id="1451597"/>
<dbReference type="KEGG" id="mja:MJ_0720"/>
<dbReference type="eggNOG" id="arCOG01163">
    <property type="taxonomic scope" value="Archaea"/>
</dbReference>
<dbReference type="HOGENOM" id="CLU_031953_0_1_2"/>
<dbReference type="InParanoid" id="Q58130"/>
<dbReference type="OrthoDB" id="6813at2157"/>
<dbReference type="PhylomeDB" id="Q58130"/>
<dbReference type="BioCyc" id="MetaCyc:MONOMER-13649"/>
<dbReference type="SABIO-RK" id="Q58130"/>
<dbReference type="UniPathway" id="UPA00047">
    <property type="reaction ID" value="UER00069"/>
</dbReference>
<dbReference type="UniPathway" id="UPA00048">
    <property type="reaction ID" value="UER00072"/>
</dbReference>
<dbReference type="Proteomes" id="UP000000805">
    <property type="component" value="Chromosome"/>
</dbReference>
<dbReference type="GO" id="GO:0005737">
    <property type="term" value="C:cytoplasm"/>
    <property type="evidence" value="ECO:0007669"/>
    <property type="project" value="UniProtKB-SubCell"/>
</dbReference>
<dbReference type="GO" id="GO:0003862">
    <property type="term" value="F:3-isopropylmalate dehydrogenase activity"/>
    <property type="evidence" value="ECO:0007669"/>
    <property type="project" value="UniProtKB-EC"/>
</dbReference>
<dbReference type="GO" id="GO:0046553">
    <property type="term" value="F:D-malate dehydrogenase (decarboxylating) (NAD+) activity"/>
    <property type="evidence" value="ECO:0007669"/>
    <property type="project" value="UniProtKB-EC"/>
</dbReference>
<dbReference type="GO" id="GO:0004449">
    <property type="term" value="F:isocitrate dehydrogenase (NAD+) activity"/>
    <property type="evidence" value="ECO:0000318"/>
    <property type="project" value="GO_Central"/>
</dbReference>
<dbReference type="GO" id="GO:0000287">
    <property type="term" value="F:magnesium ion binding"/>
    <property type="evidence" value="ECO:0007669"/>
    <property type="project" value="InterPro"/>
</dbReference>
<dbReference type="GO" id="GO:0051287">
    <property type="term" value="F:NAD binding"/>
    <property type="evidence" value="ECO:0007669"/>
    <property type="project" value="InterPro"/>
</dbReference>
<dbReference type="GO" id="GO:0019298">
    <property type="term" value="P:coenzyme B biosynthetic process"/>
    <property type="evidence" value="ECO:0000314"/>
    <property type="project" value="MENGO"/>
</dbReference>
<dbReference type="GO" id="GO:0006102">
    <property type="term" value="P:isocitrate metabolic process"/>
    <property type="evidence" value="ECO:0000318"/>
    <property type="project" value="GO_Central"/>
</dbReference>
<dbReference type="GO" id="GO:0009097">
    <property type="term" value="P:isoleucine biosynthetic process"/>
    <property type="evidence" value="ECO:0007669"/>
    <property type="project" value="UniProtKB-UniPathway"/>
</dbReference>
<dbReference type="GO" id="GO:0009098">
    <property type="term" value="P:L-leucine biosynthetic process"/>
    <property type="evidence" value="ECO:0007669"/>
    <property type="project" value="UniProtKB-UniPathway"/>
</dbReference>
<dbReference type="FunFam" id="3.40.718.10:FF:000019">
    <property type="entry name" value="Homoisocitrate dehydrogenase"/>
    <property type="match status" value="1"/>
</dbReference>
<dbReference type="Gene3D" id="3.40.718.10">
    <property type="entry name" value="Isopropylmalate Dehydrogenase"/>
    <property type="match status" value="1"/>
</dbReference>
<dbReference type="InterPro" id="IPR019818">
    <property type="entry name" value="IsoCit/isopropylmalate_DH_CS"/>
</dbReference>
<dbReference type="InterPro" id="IPR024084">
    <property type="entry name" value="IsoPropMal-DH-like_dom"/>
</dbReference>
<dbReference type="InterPro" id="IPR011828">
    <property type="entry name" value="LEU3_arc"/>
</dbReference>
<dbReference type="NCBIfam" id="TIGR02088">
    <property type="entry name" value="LEU3_arch"/>
    <property type="match status" value="1"/>
</dbReference>
<dbReference type="PANTHER" id="PTHR11835">
    <property type="entry name" value="DECARBOXYLATING DEHYDROGENASES-ISOCITRATE, ISOPROPYLMALATE, TARTRATE"/>
    <property type="match status" value="1"/>
</dbReference>
<dbReference type="PANTHER" id="PTHR11835:SF34">
    <property type="entry name" value="ISOCITRATE DEHYDROGENASE [NAD] SUBUNIT ALPHA, MITOCHONDRIAL"/>
    <property type="match status" value="1"/>
</dbReference>
<dbReference type="Pfam" id="PF00180">
    <property type="entry name" value="Iso_dh"/>
    <property type="match status" value="1"/>
</dbReference>
<dbReference type="SMART" id="SM01329">
    <property type="entry name" value="Iso_dh"/>
    <property type="match status" value="1"/>
</dbReference>
<dbReference type="SUPFAM" id="SSF53659">
    <property type="entry name" value="Isocitrate/Isopropylmalate dehydrogenase-like"/>
    <property type="match status" value="1"/>
</dbReference>
<dbReference type="PROSITE" id="PS00470">
    <property type="entry name" value="IDH_IMDH"/>
    <property type="match status" value="1"/>
</dbReference>
<organism>
    <name type="scientific">Methanocaldococcus jannaschii (strain ATCC 43067 / DSM 2661 / JAL-1 / JCM 10045 / NBRC 100440)</name>
    <name type="common">Methanococcus jannaschii</name>
    <dbReference type="NCBI Taxonomy" id="243232"/>
    <lineage>
        <taxon>Archaea</taxon>
        <taxon>Methanobacteriati</taxon>
        <taxon>Methanobacteriota</taxon>
        <taxon>Methanomada group</taxon>
        <taxon>Methanococci</taxon>
        <taxon>Methanococcales</taxon>
        <taxon>Methanocaldococcaceae</taxon>
        <taxon>Methanocaldococcus</taxon>
    </lineage>
</organism>
<accession>Q58130</accession>
<sequence length="333" mass="36330">MHKICVIEGDGIGKEVVPATIQVLEATGLPFEFVYAEAGDEVYKRTGKALPEETIETALDCDAVLFGAAGETAADVIVKLRHILDTYANIRPVKAYKGVKCLRPDIDYVIVRENTEGLYKGIEAEIDEGITIATRVITEKACERIFRFAFNLARERKKMGKEGKVTCAHKANVLKLTDGLFKKIFYKVAEEYDDIKAEDYYIDAMNMYIITKPQVFDVVVTSNLFGDILSDGAAGTVGGLGLAPSANIGDEHGLFEPVHGSAPDIAGKKIANPTATILSAVLMLRYLGEYEAADKVEKALEEVLALGLTTPDLGGNLNTFEMAEEVAKRVREE</sequence>
<reference key="1">
    <citation type="journal article" date="1996" name="Science">
        <title>Complete genome sequence of the methanogenic archaeon, Methanococcus jannaschii.</title>
        <authorList>
            <person name="Bult C.J."/>
            <person name="White O."/>
            <person name="Olsen G.J."/>
            <person name="Zhou L."/>
            <person name="Fleischmann R.D."/>
            <person name="Sutton G.G."/>
            <person name="Blake J.A."/>
            <person name="FitzGerald L.M."/>
            <person name="Clayton R.A."/>
            <person name="Gocayne J.D."/>
            <person name="Kerlavage A.R."/>
            <person name="Dougherty B.A."/>
            <person name="Tomb J.-F."/>
            <person name="Adams M.D."/>
            <person name="Reich C.I."/>
            <person name="Overbeek R."/>
            <person name="Kirkness E.F."/>
            <person name="Weinstock K.G."/>
            <person name="Merrick J.M."/>
            <person name="Glodek A."/>
            <person name="Scott J.L."/>
            <person name="Geoghagen N.S.M."/>
            <person name="Weidman J.F."/>
            <person name="Fuhrmann J.L."/>
            <person name="Nguyen D."/>
            <person name="Utterback T.R."/>
            <person name="Kelley J.M."/>
            <person name="Peterson J.D."/>
            <person name="Sadow P.W."/>
            <person name="Hanna M.C."/>
            <person name="Cotton M.D."/>
            <person name="Roberts K.M."/>
            <person name="Hurst M.A."/>
            <person name="Kaine B.P."/>
            <person name="Borodovsky M."/>
            <person name="Klenk H.-P."/>
            <person name="Fraser C.M."/>
            <person name="Smith H.O."/>
            <person name="Woese C.R."/>
            <person name="Venter J.C."/>
        </authorList>
    </citation>
    <scope>NUCLEOTIDE SEQUENCE [LARGE SCALE GENOMIC DNA]</scope>
    <source>
        <strain>ATCC 43067 / DSM 2661 / JAL-1 / JCM 10045 / NBRC 100440</strain>
    </source>
</reference>
<reference key="2">
    <citation type="journal article" date="2000" name="J. Bacteriol.">
        <title>Identification of enzymes homologous to isocitrate dehydrogenase that are involved in coenzyme B and leucine biosynthesis in methanoarchaea.</title>
        <authorList>
            <person name="Howell D.M."/>
            <person name="Graupner M."/>
            <person name="Xu H."/>
            <person name="White R.H."/>
        </authorList>
    </citation>
    <scope>CHARACTERIZATION</scope>
</reference>
<reference key="3">
    <citation type="journal article" date="2007" name="J. Bacteriol.">
        <title>Enzymology and evolution of the pyruvate pathway to 2-oxobutyrate in Methanocaldococcus jannaschii.</title>
        <authorList>
            <person name="Drevland R.M."/>
            <person name="Waheed A."/>
            <person name="Graham D.E."/>
        </authorList>
    </citation>
    <scope>FUNCTION</scope>
    <scope>CATALYTIC ACTIVITY</scope>
    <scope>SUBSTRATE SPECIFICITY</scope>
    <scope>KINETIC PARAMETERS</scope>
    <scope>SUBUNIT</scope>
    <source>
        <strain>ATCC 43067 / DSM 2661 / JAL-1 / JCM 10045 / NBRC 100440</strain>
    </source>
</reference>
<proteinExistence type="evidence at protein level"/>
<comment type="function">
    <text evidence="2">Catalyzes the oxidation of 3-carboxy-2-hydroxy-4-methylpentanoate (3-isopropylmalate) to 3-carboxy-4-methyl-2-oxopentanoate, which decarboxylates to 4-methyl-2-oxopentanoate (2-oxoisocaproate). Also catalyzes the oxidative decarboxylation of 3-methylmalate to 2-oxobutyrate, and that of D-malate to pyruvate. Cannot use NADP(+) instead of NAD(+). Cannot catalyze the oxidation of L-malate, L-tartrate, D-tartrate, DL-isocitrate, or DL-lactate.</text>
</comment>
<comment type="catalytic activity">
    <reaction evidence="2">
        <text>(2R,3S)-3-isopropylmalate + NAD(+) = 4-methyl-2-oxopentanoate + CO2 + NADH</text>
        <dbReference type="Rhea" id="RHEA:32271"/>
        <dbReference type="ChEBI" id="CHEBI:16526"/>
        <dbReference type="ChEBI" id="CHEBI:17865"/>
        <dbReference type="ChEBI" id="CHEBI:35121"/>
        <dbReference type="ChEBI" id="CHEBI:57540"/>
        <dbReference type="ChEBI" id="CHEBI:57945"/>
        <dbReference type="EC" id="1.1.1.85"/>
    </reaction>
</comment>
<comment type="catalytic activity">
    <reaction evidence="2">
        <text>(2R,3S)-3-methylmalate + NAD(+) = 2-oxobutanoate + CO2 + NADH</text>
        <dbReference type="Rhea" id="RHEA:32715"/>
        <dbReference type="ChEBI" id="CHEBI:16526"/>
        <dbReference type="ChEBI" id="CHEBI:16763"/>
        <dbReference type="ChEBI" id="CHEBI:57540"/>
        <dbReference type="ChEBI" id="CHEBI:57945"/>
        <dbReference type="ChEBI" id="CHEBI:58511"/>
        <dbReference type="EC" id="1.1.1.n5"/>
    </reaction>
</comment>
<comment type="catalytic activity">
    <reaction evidence="2">
        <text>(R)-malate + NAD(+) = pyruvate + CO2 + NADH</text>
        <dbReference type="Rhea" id="RHEA:18365"/>
        <dbReference type="ChEBI" id="CHEBI:15361"/>
        <dbReference type="ChEBI" id="CHEBI:15588"/>
        <dbReference type="ChEBI" id="CHEBI:16526"/>
        <dbReference type="ChEBI" id="CHEBI:57540"/>
        <dbReference type="ChEBI" id="CHEBI:57945"/>
        <dbReference type="EC" id="1.1.1.83"/>
    </reaction>
</comment>
<comment type="cofactor">
    <cofactor evidence="1">
        <name>Mg(2+)</name>
        <dbReference type="ChEBI" id="CHEBI:18420"/>
    </cofactor>
    <cofactor evidence="1">
        <name>Mn(2+)</name>
        <dbReference type="ChEBI" id="CHEBI:29035"/>
    </cofactor>
    <text evidence="1">Binds 1 Mg(2+) or Mn(2+) ion per subunit.</text>
</comment>
<comment type="biophysicochemical properties">
    <kinetics>
        <KM evidence="2">24 uM for 3-isopropylmalate</KM>
        <KM evidence="2">410 uM for D-malate</KM>
    </kinetics>
    <temperatureDependence>
        <text>Loses 50% of its activity after heating at 80 degrees Celsius for 10 min.</text>
    </temperatureDependence>
</comment>
<comment type="pathway">
    <text>Amino-acid biosynthesis; L-leucine biosynthesis; L-leucine from 3-methyl-2-oxobutanoate: step 3/4.</text>
</comment>
<comment type="pathway">
    <text>Amino-acid biosynthesis; L-isoleucine biosynthesis; 2-oxobutanoate from pyruvate: step 3/3.</text>
</comment>
<comment type="subunit">
    <text evidence="2">Homotetramer.</text>
</comment>
<comment type="subcellular location">
    <subcellularLocation>
        <location evidence="3">Cytoplasm</location>
    </subcellularLocation>
</comment>
<comment type="similarity">
    <text evidence="3">Belongs to the isocitrate and isopropylmalate dehydrogenases family.</text>
</comment>
<evidence type="ECO:0000250" key="1"/>
<evidence type="ECO:0000269" key="2">
    <source>
    </source>
</evidence>
<evidence type="ECO:0000305" key="3"/>
<feature type="chain" id="PRO_0000083809" description="3-isopropylmalate/3-methylmalate dehydrogenase">
    <location>
        <begin position="1"/>
        <end position="333"/>
    </location>
</feature>
<feature type="binding site" evidence="1">
    <location>
        <position position="81"/>
    </location>
    <ligand>
        <name>substrate</name>
    </ligand>
</feature>
<feature type="binding site" evidence="1">
    <location>
        <position position="91"/>
    </location>
    <ligand>
        <name>substrate</name>
    </ligand>
</feature>
<feature type="binding site" evidence="1">
    <location>
        <position position="112"/>
    </location>
    <ligand>
        <name>substrate</name>
    </ligand>
</feature>
<feature type="binding site" evidence="1">
    <location>
        <position position="203"/>
    </location>
    <ligand>
        <name>Mg(2+)</name>
        <dbReference type="ChEBI" id="CHEBI:18420"/>
    </ligand>
</feature>
<feature type="binding site" evidence="1">
    <location>
        <position position="203"/>
    </location>
    <ligand>
        <name>substrate</name>
    </ligand>
</feature>
<feature type="binding site" evidence="1">
    <location>
        <position position="227"/>
    </location>
    <ligand>
        <name>Mg(2+)</name>
        <dbReference type="ChEBI" id="CHEBI:18420"/>
    </ligand>
</feature>
<feature type="binding site" evidence="1">
    <location>
        <position position="231"/>
    </location>
    <ligand>
        <name>Mg(2+)</name>
        <dbReference type="ChEBI" id="CHEBI:18420"/>
    </ligand>
</feature>
<feature type="binding site" evidence="1">
    <location>
        <begin position="260"/>
        <end position="272"/>
    </location>
    <ligand>
        <name>NAD(+)</name>
        <dbReference type="ChEBI" id="CHEBI:57540"/>
    </ligand>
</feature>
<feature type="site" description="Important for catalysis" evidence="1">
    <location>
        <position position="119"/>
    </location>
</feature>
<feature type="site" description="Important for catalysis" evidence="1">
    <location>
        <position position="170"/>
    </location>
</feature>
<keyword id="KW-0028">Amino-acid biosynthesis</keyword>
<keyword id="KW-0100">Branched-chain amino acid biosynthesis</keyword>
<keyword id="KW-0963">Cytoplasm</keyword>
<keyword id="KW-0412">Isoleucine biosynthesis</keyword>
<keyword id="KW-0432">Leucine biosynthesis</keyword>
<keyword id="KW-0460">Magnesium</keyword>
<keyword id="KW-0464">Manganese</keyword>
<keyword id="KW-0479">Metal-binding</keyword>
<keyword id="KW-0520">NAD</keyword>
<keyword id="KW-0560">Oxidoreductase</keyword>
<keyword id="KW-1185">Reference proteome</keyword>